<organism>
    <name type="scientific">Dictyostelium discoideum</name>
    <name type="common">Social amoeba</name>
    <dbReference type="NCBI Taxonomy" id="44689"/>
    <lineage>
        <taxon>Eukaryota</taxon>
        <taxon>Amoebozoa</taxon>
        <taxon>Evosea</taxon>
        <taxon>Eumycetozoa</taxon>
        <taxon>Dictyostelia</taxon>
        <taxon>Dictyosteliales</taxon>
        <taxon>Dictyosteliaceae</taxon>
        <taxon>Dictyostelium</taxon>
    </lineage>
</organism>
<name>AIFM1_DICDI</name>
<sequence length="532" mass="59667">MIRNLTKLTKFTIGNRFYQSSSKGRFSGKNGNNAFKSIVGVSVGVSALFAGCVFLDQEKEPESTPSIDVKEKKSQPPKTKEDYQKKMDEEYDIEQFKYVIIGGGTAAYHAIDKILENDKEATILLISKEYEVPYQRPPLTKSLWATKDDNVVNTLNFSDWSGKKQNLLYEQESAYGNEILQFIRTKKVIDLHIDEKLVLLNDGKLIRYDKCLIATGGEPRQLKFTSTNDKKISTYRTVEDFRKLYEVVKDGGKHVTVLGGGFLGSELTCAINSNFQDKNIKIDQIFPESGVLSTLFPDYLSKYATEEIIKSGVNVHTGTLIKDVVDNSENGRLTVTLNNGKTFETDHVVVAAGIIPNTNVVKSTTLEIDPINGGYVVNPELQARTDLYVAGDVASYYDFSLGVRRRVEHHDHARATGEMAGSNMSTKDTPAPYTYQPFFWSDLTPGVGFEAVGNTSSKLKTFSVWEKPSSDETKQSYTKGNIYYLNDNNNVVGVLCYGNYGKMDTARDLILKRRTIEDLNQLQHAIDFDEHH</sequence>
<comment type="function">
    <text evidence="5">Probable NADH oxidoreductase that acts as a caspase-independent mitochondrial effector of apoptotic cell death.</text>
</comment>
<comment type="catalytic activity">
    <reaction evidence="2">
        <text>A + NADH + H(+) = AH2 + NAD(+)</text>
        <dbReference type="Rhea" id="RHEA:11356"/>
        <dbReference type="ChEBI" id="CHEBI:13193"/>
        <dbReference type="ChEBI" id="CHEBI:15378"/>
        <dbReference type="ChEBI" id="CHEBI:17499"/>
        <dbReference type="ChEBI" id="CHEBI:57540"/>
        <dbReference type="ChEBI" id="CHEBI:57945"/>
    </reaction>
</comment>
<comment type="cofactor">
    <cofactor>
        <name>FAD</name>
        <dbReference type="ChEBI" id="CHEBI:57692"/>
    </cofactor>
</comment>
<comment type="subcellular location">
    <subcellularLocation>
        <location evidence="5">Mitochondrion</location>
    </subcellularLocation>
    <subcellularLocation>
        <location evidence="5">Cytoplasm</location>
    </subcellularLocation>
    <subcellularLocation>
        <location evidence="5">Nucleus</location>
    </subcellularLocation>
    <text>Translocates from mitochondria to the cytoplasm and secondary to the nucleus after the onset of cell death.</text>
</comment>
<comment type="similarity">
    <text evidence="6">Belongs to the FAD-dependent oxidoreductase family.</text>
</comment>
<evidence type="ECO:0000250" key="1"/>
<evidence type="ECO:0000250" key="2">
    <source>
        <dbReference type="UniProtKB" id="O95831"/>
    </source>
</evidence>
<evidence type="ECO:0000255" key="3"/>
<evidence type="ECO:0000256" key="4">
    <source>
        <dbReference type="SAM" id="MobiDB-lite"/>
    </source>
</evidence>
<evidence type="ECO:0000269" key="5">
    <source>
    </source>
</evidence>
<evidence type="ECO:0000305" key="6"/>
<accession>Q9GRX6</accession>
<accession>Q54J72</accession>
<keyword id="KW-0053">Apoptosis</keyword>
<keyword id="KW-0963">Cytoplasm</keyword>
<keyword id="KW-0274">FAD</keyword>
<keyword id="KW-0285">Flavoprotein</keyword>
<keyword id="KW-0496">Mitochondrion</keyword>
<keyword id="KW-0520">NAD</keyword>
<keyword id="KW-0539">Nucleus</keyword>
<keyword id="KW-0560">Oxidoreductase</keyword>
<keyword id="KW-1185">Reference proteome</keyword>
<keyword id="KW-0809">Transit peptide</keyword>
<dbReference type="EC" id="1.6.99.-" evidence="2"/>
<dbReference type="EMBL" id="AJ272500">
    <property type="protein sequence ID" value="CAC14872.1"/>
    <property type="molecule type" value="mRNA"/>
</dbReference>
<dbReference type="EMBL" id="AAFI02000109">
    <property type="protein sequence ID" value="EAL63305.1"/>
    <property type="molecule type" value="Genomic_DNA"/>
</dbReference>
<dbReference type="RefSeq" id="XP_636815.1">
    <property type="nucleotide sequence ID" value="XM_631723.1"/>
</dbReference>
<dbReference type="SMR" id="Q9GRX6"/>
<dbReference type="FunCoup" id="Q9GRX6">
    <property type="interactions" value="575"/>
</dbReference>
<dbReference type="STRING" id="44689.Q9GRX6"/>
<dbReference type="GlyGen" id="Q9GRX6">
    <property type="glycosylation" value="1 site"/>
</dbReference>
<dbReference type="PaxDb" id="44689-DDB0191137"/>
<dbReference type="EnsemblProtists" id="EAL63305">
    <property type="protein sequence ID" value="EAL63305"/>
    <property type="gene ID" value="DDB_G0288247"/>
</dbReference>
<dbReference type="GeneID" id="8626532"/>
<dbReference type="KEGG" id="ddi:DDB_G0288247"/>
<dbReference type="dictyBase" id="DDB_G0288247">
    <property type="gene designation" value="aif"/>
</dbReference>
<dbReference type="VEuPathDB" id="AmoebaDB:DDB_G0288247"/>
<dbReference type="eggNOG" id="KOG1346">
    <property type="taxonomic scope" value="Eukaryota"/>
</dbReference>
<dbReference type="HOGENOM" id="CLU_003291_5_3_1"/>
<dbReference type="InParanoid" id="Q9GRX6"/>
<dbReference type="OMA" id="RSIFFEH"/>
<dbReference type="PhylomeDB" id="Q9GRX6"/>
<dbReference type="PRO" id="PR:Q9GRX6"/>
<dbReference type="Proteomes" id="UP000002195">
    <property type="component" value="Chromosome 5"/>
</dbReference>
<dbReference type="GO" id="GO:0005737">
    <property type="term" value="C:cytoplasm"/>
    <property type="evidence" value="ECO:0000318"/>
    <property type="project" value="GO_Central"/>
</dbReference>
<dbReference type="GO" id="GO:0005758">
    <property type="term" value="C:mitochondrial intermembrane space"/>
    <property type="evidence" value="ECO:0000250"/>
    <property type="project" value="UniProtKB"/>
</dbReference>
<dbReference type="GO" id="GO:0005739">
    <property type="term" value="C:mitochondrion"/>
    <property type="evidence" value="ECO:0000314"/>
    <property type="project" value="dictyBase"/>
</dbReference>
<dbReference type="GO" id="GO:0005634">
    <property type="term" value="C:nucleus"/>
    <property type="evidence" value="ECO:0000314"/>
    <property type="project" value="dictyBase"/>
</dbReference>
<dbReference type="GO" id="GO:0140220">
    <property type="term" value="C:pathogen-containing vacuole"/>
    <property type="evidence" value="ECO:0007005"/>
    <property type="project" value="dictyBase"/>
</dbReference>
<dbReference type="GO" id="GO:0045335">
    <property type="term" value="C:phagocytic vesicle"/>
    <property type="evidence" value="ECO:0007005"/>
    <property type="project" value="dictyBase"/>
</dbReference>
<dbReference type="GO" id="GO:0003677">
    <property type="term" value="F:DNA binding"/>
    <property type="evidence" value="ECO:0000250"/>
    <property type="project" value="UniProtKB"/>
</dbReference>
<dbReference type="GO" id="GO:0071949">
    <property type="term" value="F:FAD binding"/>
    <property type="evidence" value="ECO:0000250"/>
    <property type="project" value="UniProtKB"/>
</dbReference>
<dbReference type="GO" id="GO:0016174">
    <property type="term" value="F:NAD(P)H oxidase H2O2-forming activity"/>
    <property type="evidence" value="ECO:0000250"/>
    <property type="project" value="UniProtKB"/>
</dbReference>
<dbReference type="GO" id="GO:0003954">
    <property type="term" value="F:NADH dehydrogenase activity"/>
    <property type="evidence" value="ECO:0007669"/>
    <property type="project" value="RHEA"/>
</dbReference>
<dbReference type="GO" id="GO:0016651">
    <property type="term" value="F:oxidoreductase activity, acting on NAD(P)H"/>
    <property type="evidence" value="ECO:0000250"/>
    <property type="project" value="UniProtKB"/>
</dbReference>
<dbReference type="GO" id="GO:0046983">
    <property type="term" value="F:protein dimerization activity"/>
    <property type="evidence" value="ECO:0007669"/>
    <property type="project" value="InterPro"/>
</dbReference>
<dbReference type="GO" id="GO:0030261">
    <property type="term" value="P:chromosome condensation"/>
    <property type="evidence" value="ECO:0000314"/>
    <property type="project" value="dictyBase"/>
</dbReference>
<dbReference type="GO" id="GO:0006308">
    <property type="term" value="P:DNA catabolic process"/>
    <property type="evidence" value="ECO:0000314"/>
    <property type="project" value="dictyBase"/>
</dbReference>
<dbReference type="GO" id="GO:0000266">
    <property type="term" value="P:mitochondrial fission"/>
    <property type="evidence" value="ECO:0000315"/>
    <property type="project" value="dictyBase"/>
</dbReference>
<dbReference type="GO" id="GO:0033615">
    <property type="term" value="P:mitochondrial proton-transporting ATP synthase complex assembly"/>
    <property type="evidence" value="ECO:0000315"/>
    <property type="project" value="dictyBase"/>
</dbReference>
<dbReference type="GO" id="GO:0033108">
    <property type="term" value="P:mitochondrial respiratory chain complex assembly"/>
    <property type="evidence" value="ECO:0000250"/>
    <property type="project" value="UniProtKB"/>
</dbReference>
<dbReference type="GO" id="GO:0012501">
    <property type="term" value="P:programmed cell death"/>
    <property type="evidence" value="ECO:0000314"/>
    <property type="project" value="dictyBase"/>
</dbReference>
<dbReference type="GO" id="GO:0045041">
    <property type="term" value="P:protein import into mitochondrial intermembrane space"/>
    <property type="evidence" value="ECO:0000250"/>
    <property type="project" value="UniProtKB"/>
</dbReference>
<dbReference type="GO" id="GO:0072593">
    <property type="term" value="P:reactive oxygen species metabolic process"/>
    <property type="evidence" value="ECO:0000315"/>
    <property type="project" value="dictyBase"/>
</dbReference>
<dbReference type="GO" id="GO:0051881">
    <property type="term" value="P:regulation of mitochondrial membrane potential"/>
    <property type="evidence" value="ECO:0000315"/>
    <property type="project" value="dictyBase"/>
</dbReference>
<dbReference type="FunFam" id="3.50.50.60:FF:000625">
    <property type="entry name" value="Nitrate reductase, NADH oxidase subunit"/>
    <property type="match status" value="1"/>
</dbReference>
<dbReference type="Gene3D" id="3.30.390.30">
    <property type="match status" value="1"/>
</dbReference>
<dbReference type="Gene3D" id="3.50.50.60">
    <property type="entry name" value="FAD/NAD(P)-binding domain"/>
    <property type="match status" value="2"/>
</dbReference>
<dbReference type="InterPro" id="IPR029324">
    <property type="entry name" value="AIF_C"/>
</dbReference>
<dbReference type="InterPro" id="IPR050446">
    <property type="entry name" value="FAD-oxidoreductase/Apoptosis"/>
</dbReference>
<dbReference type="InterPro" id="IPR036188">
    <property type="entry name" value="FAD/NAD-bd_sf"/>
</dbReference>
<dbReference type="InterPro" id="IPR023753">
    <property type="entry name" value="FAD/NAD-binding_dom"/>
</dbReference>
<dbReference type="InterPro" id="IPR016156">
    <property type="entry name" value="FAD/NAD-linked_Rdtase_dimer_sf"/>
</dbReference>
<dbReference type="PANTHER" id="PTHR43557">
    <property type="entry name" value="APOPTOSIS-INDUCING FACTOR 1"/>
    <property type="match status" value="1"/>
</dbReference>
<dbReference type="PANTHER" id="PTHR43557:SF4">
    <property type="entry name" value="APOPTOSIS-INDUCING FACTOR 1, MITOCHONDRIAL"/>
    <property type="match status" value="1"/>
</dbReference>
<dbReference type="Pfam" id="PF14721">
    <property type="entry name" value="AIF_C"/>
    <property type="match status" value="1"/>
</dbReference>
<dbReference type="Pfam" id="PF07992">
    <property type="entry name" value="Pyr_redox_2"/>
    <property type="match status" value="1"/>
</dbReference>
<dbReference type="PRINTS" id="PR00368">
    <property type="entry name" value="FADPNR"/>
</dbReference>
<dbReference type="PRINTS" id="PR00411">
    <property type="entry name" value="PNDRDTASEI"/>
</dbReference>
<dbReference type="SMART" id="SM01353">
    <property type="entry name" value="AIF_C"/>
    <property type="match status" value="1"/>
</dbReference>
<dbReference type="SUPFAM" id="SSF51905">
    <property type="entry name" value="FAD/NAD(P)-binding domain"/>
    <property type="match status" value="1"/>
</dbReference>
<dbReference type="SUPFAM" id="SSF55424">
    <property type="entry name" value="FAD/NAD-linked reductases, dimerisation (C-terminal) domain"/>
    <property type="match status" value="1"/>
</dbReference>
<feature type="transit peptide" description="Mitochondrion" evidence="3">
    <location>
        <begin position="1"/>
        <end position="26"/>
    </location>
</feature>
<feature type="chain" id="PRO_0000378099" description="Apoptosis-inducing factor 1, mitochondrial">
    <location>
        <begin position="27"/>
        <end position="532"/>
    </location>
</feature>
<feature type="region of interest" description="Disordered" evidence="4">
    <location>
        <begin position="63"/>
        <end position="84"/>
    </location>
</feature>
<feature type="region of interest" description="FAD-dependent oxidoreductase" evidence="1">
    <location>
        <begin position="98"/>
        <end position="440"/>
    </location>
</feature>
<feature type="short sequence motif" description="Nuclear localization signal">
    <location>
        <begin position="400"/>
        <end position="406"/>
    </location>
</feature>
<feature type="binding site" evidence="2">
    <location>
        <begin position="102"/>
        <end position="106"/>
    </location>
    <ligand>
        <name>FAD</name>
        <dbReference type="ChEBI" id="CHEBI:57692"/>
    </ligand>
</feature>
<feature type="binding site" evidence="1">
    <location>
        <begin position="128"/>
        <end position="129"/>
    </location>
    <ligand>
        <name>FAD</name>
        <dbReference type="ChEBI" id="CHEBI:57692"/>
    </ligand>
</feature>
<feature type="binding site" evidence="2">
    <location>
        <position position="136"/>
    </location>
    <ligand>
        <name>FAD</name>
        <dbReference type="ChEBI" id="CHEBI:57692"/>
    </ligand>
</feature>
<feature type="binding site" evidence="2">
    <location>
        <position position="141"/>
    </location>
    <ligand>
        <name>FAD</name>
        <dbReference type="ChEBI" id="CHEBI:57692"/>
    </ligand>
</feature>
<feature type="binding site" evidence="2">
    <location>
        <position position="160"/>
    </location>
    <ligand>
        <name>NAD(+)</name>
        <dbReference type="ChEBI" id="CHEBI:57540"/>
        <label>2</label>
    </ligand>
</feature>
<feature type="binding site" evidence="2">
    <location>
        <position position="188"/>
    </location>
    <ligand>
        <name>FAD</name>
        <dbReference type="ChEBI" id="CHEBI:57692"/>
    </ligand>
</feature>
<feature type="binding site" evidence="2">
    <location>
        <position position="236"/>
    </location>
    <ligand>
        <name>FAD</name>
        <dbReference type="ChEBI" id="CHEBI:57692"/>
    </ligand>
</feature>
<feature type="binding site" evidence="2">
    <location>
        <begin position="260"/>
        <end position="263"/>
    </location>
    <ligand>
        <name>NAD(+)</name>
        <dbReference type="ChEBI" id="CHEBI:57540"/>
        <label>1</label>
    </ligand>
</feature>
<feature type="binding site" evidence="2">
    <location>
        <position position="288"/>
    </location>
    <ligand>
        <name>NAD(+)</name>
        <dbReference type="ChEBI" id="CHEBI:57540"/>
        <label>1</label>
    </ligand>
</feature>
<feature type="binding site" evidence="2">
    <location>
        <position position="353"/>
    </location>
    <ligand>
        <name>NAD(+)</name>
        <dbReference type="ChEBI" id="CHEBI:57540"/>
        <label>1</label>
    </ligand>
</feature>
<feature type="binding site" evidence="2">
    <location>
        <position position="392"/>
    </location>
    <ligand>
        <name>FAD</name>
        <dbReference type="ChEBI" id="CHEBI:57692"/>
    </ligand>
</feature>
<feature type="binding site" evidence="2">
    <location>
        <begin position="408"/>
        <end position="409"/>
    </location>
    <ligand>
        <name>NAD(+)</name>
        <dbReference type="ChEBI" id="CHEBI:57540"/>
        <label>1</label>
    </ligand>
</feature>
<feature type="binding site" evidence="2">
    <location>
        <begin position="409"/>
        <end position="410"/>
    </location>
    <ligand>
        <name>FAD</name>
        <dbReference type="ChEBI" id="CHEBI:57692"/>
    </ligand>
</feature>
<feature type="binding site" evidence="2">
    <location>
        <position position="440"/>
    </location>
    <ligand>
        <name>FAD</name>
        <dbReference type="ChEBI" id="CHEBI:57692"/>
    </ligand>
</feature>
<feature type="binding site" evidence="2">
    <location>
        <position position="440"/>
    </location>
    <ligand>
        <name>NAD(+)</name>
        <dbReference type="ChEBI" id="CHEBI:57540"/>
        <label>1</label>
    </ligand>
</feature>
<feature type="binding site" evidence="2">
    <location>
        <position position="450"/>
    </location>
    <ligand>
        <name>NAD(+)</name>
        <dbReference type="ChEBI" id="CHEBI:57540"/>
        <label>2</label>
    </ligand>
</feature>
<proteinExistence type="evidence at transcript level"/>
<protein>
    <recommendedName>
        <fullName>Apoptosis-inducing factor 1, mitochondrial</fullName>
        <ecNumber evidence="2">1.6.99.-</ecNumber>
    </recommendedName>
    <alternativeName>
        <fullName>Ddaif</fullName>
    </alternativeName>
</protein>
<reference key="1">
    <citation type="journal article" date="2001" name="Mol. Biol. Cell">
        <title>On the evolutionary conservation of the cell death pathway: mitochondrial release of an apoptosis-inducing factor during Dictyostelium discoideum cell death.</title>
        <authorList>
            <person name="Arnoult D."/>
            <person name="Tatischeff I."/>
            <person name="Estaquier J."/>
            <person name="Girard M."/>
            <person name="Sureau F."/>
            <person name="Tissier J.-P."/>
            <person name="Grodet A."/>
            <person name="Dellinger M."/>
            <person name="Traincard F."/>
            <person name="Kahn A."/>
            <person name="Ameisen J.-C."/>
            <person name="Petit P.X."/>
        </authorList>
    </citation>
    <scope>NUCLEOTIDE SEQUENCE [MRNA]</scope>
    <scope>FUNCTION</scope>
    <scope>SUBCELLULAR LOCATION</scope>
</reference>
<reference key="2">
    <citation type="journal article" date="2005" name="Nature">
        <title>The genome of the social amoeba Dictyostelium discoideum.</title>
        <authorList>
            <person name="Eichinger L."/>
            <person name="Pachebat J.A."/>
            <person name="Gloeckner G."/>
            <person name="Rajandream M.A."/>
            <person name="Sucgang R."/>
            <person name="Berriman M."/>
            <person name="Song J."/>
            <person name="Olsen R."/>
            <person name="Szafranski K."/>
            <person name="Xu Q."/>
            <person name="Tunggal B."/>
            <person name="Kummerfeld S."/>
            <person name="Madera M."/>
            <person name="Konfortov B.A."/>
            <person name="Rivero F."/>
            <person name="Bankier A.T."/>
            <person name="Lehmann R."/>
            <person name="Hamlin N."/>
            <person name="Davies R."/>
            <person name="Gaudet P."/>
            <person name="Fey P."/>
            <person name="Pilcher K."/>
            <person name="Chen G."/>
            <person name="Saunders D."/>
            <person name="Sodergren E.J."/>
            <person name="Davis P."/>
            <person name="Kerhornou A."/>
            <person name="Nie X."/>
            <person name="Hall N."/>
            <person name="Anjard C."/>
            <person name="Hemphill L."/>
            <person name="Bason N."/>
            <person name="Farbrother P."/>
            <person name="Desany B."/>
            <person name="Just E."/>
            <person name="Morio T."/>
            <person name="Rost R."/>
            <person name="Churcher C.M."/>
            <person name="Cooper J."/>
            <person name="Haydock S."/>
            <person name="van Driessche N."/>
            <person name="Cronin A."/>
            <person name="Goodhead I."/>
            <person name="Muzny D.M."/>
            <person name="Mourier T."/>
            <person name="Pain A."/>
            <person name="Lu M."/>
            <person name="Harper D."/>
            <person name="Lindsay R."/>
            <person name="Hauser H."/>
            <person name="James K.D."/>
            <person name="Quiles M."/>
            <person name="Madan Babu M."/>
            <person name="Saito T."/>
            <person name="Buchrieser C."/>
            <person name="Wardroper A."/>
            <person name="Felder M."/>
            <person name="Thangavelu M."/>
            <person name="Johnson D."/>
            <person name="Knights A."/>
            <person name="Loulseged H."/>
            <person name="Mungall K.L."/>
            <person name="Oliver K."/>
            <person name="Price C."/>
            <person name="Quail M.A."/>
            <person name="Urushihara H."/>
            <person name="Hernandez J."/>
            <person name="Rabbinowitsch E."/>
            <person name="Steffen D."/>
            <person name="Sanders M."/>
            <person name="Ma J."/>
            <person name="Kohara Y."/>
            <person name="Sharp S."/>
            <person name="Simmonds M.N."/>
            <person name="Spiegler S."/>
            <person name="Tivey A."/>
            <person name="Sugano S."/>
            <person name="White B."/>
            <person name="Walker D."/>
            <person name="Woodward J.R."/>
            <person name="Winckler T."/>
            <person name="Tanaka Y."/>
            <person name="Shaulsky G."/>
            <person name="Schleicher M."/>
            <person name="Weinstock G.M."/>
            <person name="Rosenthal A."/>
            <person name="Cox E.C."/>
            <person name="Chisholm R.L."/>
            <person name="Gibbs R.A."/>
            <person name="Loomis W.F."/>
            <person name="Platzer M."/>
            <person name="Kay R.R."/>
            <person name="Williams J.G."/>
            <person name="Dear P.H."/>
            <person name="Noegel A.A."/>
            <person name="Barrell B.G."/>
            <person name="Kuspa A."/>
        </authorList>
    </citation>
    <scope>NUCLEOTIDE SEQUENCE [LARGE SCALE GENOMIC DNA]</scope>
    <source>
        <strain>AX4</strain>
    </source>
</reference>
<gene>
    <name type="primary">aif</name>
    <name type="ORF">DDB_G0288247</name>
</gene>